<evidence type="ECO:0000250" key="1">
    <source>
        <dbReference type="UniProtKB" id="P02724"/>
    </source>
</evidence>
<evidence type="ECO:0000255" key="2"/>
<evidence type="ECO:0000269" key="3">
    <source>
    </source>
</evidence>
<evidence type="ECO:0000305" key="4"/>
<reference key="1">
    <citation type="journal article" date="2008" name="Jpn. J. Vet. Res.">
        <title>Identification of genes for two major sialoglycoproteins, glycophorin A and glycophorin C in canine red cell membranes.</title>
        <authorList>
            <person name="Sato K."/>
            <person name="Otsuka Y."/>
            <person name="Arashiki N."/>
            <person name="Komatsu T."/>
            <person name="Chen-Chi W."/>
            <person name="Tamahara S."/>
            <person name="Inaba M."/>
        </authorList>
    </citation>
    <scope>NUCLEOTIDE SEQUENCE [MRNA]</scope>
</reference>
<reference key="2">
    <citation type="journal article" date="1983" name="Biochim. Biophys. Acta">
        <title>Amino acid sequence and oligosaccharide attachment sites of the glycosylated domain of dog erythrocyte glycophorin.</title>
        <authorList>
            <person name="Murayama J."/>
            <person name="Yamashita T."/>
            <person name="Tomita M."/>
            <person name="Hamada A."/>
        </authorList>
    </citation>
    <scope>PROTEIN SEQUENCE OF 18-69</scope>
    <scope>PYROGLUTAMATE FORMATION AT GLN-18</scope>
    <scope>VARIANT PRO-31</scope>
    <scope>GLYCOSYLATION AT SER-29; SER-30; THR-34; SER-40; THR-41; THR-48 AND SER-56</scope>
</reference>
<feature type="signal peptide" evidence="3">
    <location>
        <begin position="1"/>
        <end position="17"/>
    </location>
</feature>
<feature type="chain" id="PRO_0000149045" description="Glycophorin-A">
    <location>
        <begin position="18"/>
        <end position="129"/>
    </location>
</feature>
<feature type="topological domain" description="Extracellular" evidence="2">
    <location>
        <begin position="18"/>
        <end position="82"/>
    </location>
</feature>
<feature type="transmembrane region" description="Helical" evidence="2">
    <location>
        <begin position="83"/>
        <end position="103"/>
    </location>
</feature>
<feature type="topological domain" description="Cytoplasmic" evidence="2">
    <location>
        <begin position="104"/>
        <end position="129"/>
    </location>
</feature>
<feature type="modified residue" description="Pyrrolidone carboxylic acid" evidence="3">
    <location>
        <position position="18"/>
    </location>
</feature>
<feature type="glycosylation site" description="O-linked (GalNAc...) serine" evidence="3">
    <location>
        <position position="29"/>
    </location>
</feature>
<feature type="glycosylation site" description="O-linked (GalNAc...) serine" evidence="3">
    <location>
        <position position="30"/>
    </location>
</feature>
<feature type="glycosylation site" description="O-linked (GalNAc...) threonine" evidence="3">
    <location>
        <position position="34"/>
    </location>
</feature>
<feature type="glycosylation site" description="O-linked (GalNAc...) serine" evidence="3">
    <location>
        <position position="40"/>
    </location>
</feature>
<feature type="glycosylation site" description="O-linked (GalNAc...) threonine" evidence="3">
    <location>
        <position position="41"/>
    </location>
</feature>
<feature type="glycosylation site" description="O-linked (GalNAc...) threonine" evidence="3">
    <location>
        <position position="48"/>
    </location>
</feature>
<feature type="glycosylation site" description="O-linked (GalNAc...) serine" evidence="3">
    <location>
        <position position="56"/>
    </location>
</feature>
<feature type="sequence variant" evidence="3">
    <original>K</original>
    <variation>P</variation>
    <location>
        <position position="31"/>
    </location>
</feature>
<feature type="sequence conflict" description="In Ref. 2; AA sequence." evidence="4" ref="2">
    <original>E</original>
    <variation>Q</variation>
    <location>
        <position position="27"/>
    </location>
</feature>
<feature type="sequence conflict" description="In Ref. 2; AA sequence." evidence="4" ref="2">
    <original>Q</original>
    <variation>E</variation>
    <location>
        <position position="53"/>
    </location>
</feature>
<accession>P02727</accession>
<accession>A7VLI4</accession>
<name>GLPA_CANLF</name>
<protein>
    <recommendedName>
        <fullName evidence="1">Glycophorin-A</fullName>
    </recommendedName>
    <cdAntigenName>CD235a</cdAntigenName>
</protein>
<comment type="function">
    <text evidence="1">Component of the ankyrin-1 complex, a multiprotein complex involved in the stability and shape of the erythrocyte membrane. Glycophorin A is the major intrinsic membrane protein of the erythrocyte. The N-terminal glycosylated segment, which lies outside the erythrocyte membrane, has MN blood group receptors. Appears to be important for the function of SLC4A1 and is required for high activity of SLC4A1. May be involved in translocation of SLC4A1 to the plasma membrane.</text>
</comment>
<comment type="subunit">
    <text evidence="1">Homodimer. Component of the ankyrin-1 complex in the erythrocyte, composed of ANK1, RHCE, RHAG, SLC4A1, EPB42, GYPA, GYPB and AQP1. Interacts with SLC4A1; a GYPA monomer is bound at each end of the SLC4A1 dimer forming a heterotetramer.</text>
</comment>
<comment type="subcellular location">
    <subcellularLocation>
        <location>Membrane</location>
        <topology>Single-pass type I membrane protein</topology>
    </subcellularLocation>
</comment>
<comment type="similarity">
    <text evidence="4">Belongs to the glycophorin-A family.</text>
</comment>
<keyword id="KW-0903">Direct protein sequencing</keyword>
<keyword id="KW-0325">Glycoprotein</keyword>
<keyword id="KW-0472">Membrane</keyword>
<keyword id="KW-0873">Pyrrolidone carboxylic acid</keyword>
<keyword id="KW-1185">Reference proteome</keyword>
<keyword id="KW-0730">Sialic acid</keyword>
<keyword id="KW-0732">Signal</keyword>
<keyword id="KW-0812">Transmembrane</keyword>
<keyword id="KW-1133">Transmembrane helix</keyword>
<proteinExistence type="evidence at protein level"/>
<gene>
    <name evidence="1" type="primary">GYPA</name>
</gene>
<dbReference type="EMBL" id="AB299408">
    <property type="protein sequence ID" value="BAF79931.1"/>
    <property type="molecule type" value="mRNA"/>
</dbReference>
<dbReference type="PIR" id="A05273">
    <property type="entry name" value="A05273"/>
</dbReference>
<dbReference type="RefSeq" id="NP_001103430.1">
    <property type="nucleotide sequence ID" value="NM_001109960.1"/>
</dbReference>
<dbReference type="SMR" id="P02727"/>
<dbReference type="FunCoup" id="P02727">
    <property type="interactions" value="39"/>
</dbReference>
<dbReference type="STRING" id="9615.ENSCAFP00000038113"/>
<dbReference type="GlyConnect" id="185">
    <property type="glycosylation" value="3 O-Linked glycans"/>
</dbReference>
<dbReference type="GlyCosmos" id="P02727">
    <property type="glycosylation" value="7 sites, 5 glycans"/>
</dbReference>
<dbReference type="iPTMnet" id="P02727"/>
<dbReference type="SwissPalm" id="P02727"/>
<dbReference type="PaxDb" id="9612-ENSCAFP00000038113"/>
<dbReference type="Ensembl" id="ENSCAFT00000042981.3">
    <property type="protein sequence ID" value="ENSCAFP00000038113.1"/>
    <property type="gene ID" value="ENSCAFG00000031944.3"/>
</dbReference>
<dbReference type="Ensembl" id="ENSCAFT00040042095.1">
    <property type="protein sequence ID" value="ENSCAFP00040036715.1"/>
    <property type="gene ID" value="ENSCAFG00040022681.1"/>
</dbReference>
<dbReference type="Ensembl" id="ENSCAFT00845020235.1">
    <property type="protein sequence ID" value="ENSCAFP00845015862.1"/>
    <property type="gene ID" value="ENSCAFG00845011416.1"/>
</dbReference>
<dbReference type="GeneID" id="100126181"/>
<dbReference type="KEGG" id="cfa:100126181"/>
<dbReference type="CTD" id="2993"/>
<dbReference type="VEuPathDB" id="HostDB:ENSCAFG00845011416"/>
<dbReference type="eggNOG" id="ENOG502TE08">
    <property type="taxonomic scope" value="Eukaryota"/>
</dbReference>
<dbReference type="GeneTree" id="ENSGT00550000075214"/>
<dbReference type="HOGENOM" id="CLU_154690_2_0_1"/>
<dbReference type="InParanoid" id="P02727"/>
<dbReference type="OMA" id="DKHKQSM"/>
<dbReference type="OrthoDB" id="9629573at2759"/>
<dbReference type="Proteomes" id="UP000002254">
    <property type="component" value="Chromosome 15"/>
</dbReference>
<dbReference type="Proteomes" id="UP000694429">
    <property type="component" value="Unplaced"/>
</dbReference>
<dbReference type="Proteomes" id="UP000694542">
    <property type="component" value="Chromosome 15"/>
</dbReference>
<dbReference type="Proteomes" id="UP000805418">
    <property type="component" value="Chromosome 15"/>
</dbReference>
<dbReference type="Bgee" id="ENSCAFG00000031944">
    <property type="expression patterns" value="Expressed in bone marrow and 9 other cell types or tissues"/>
</dbReference>
<dbReference type="GO" id="GO:0170014">
    <property type="term" value="C:ankyrin-1 complex"/>
    <property type="evidence" value="ECO:0000250"/>
    <property type="project" value="UniProtKB"/>
</dbReference>
<dbReference type="GO" id="GO:0005886">
    <property type="term" value="C:plasma membrane"/>
    <property type="evidence" value="ECO:0000318"/>
    <property type="project" value="GO_Central"/>
</dbReference>
<dbReference type="Gene3D" id="1.20.5.70">
    <property type="match status" value="1"/>
</dbReference>
<dbReference type="InterPro" id="IPR001195">
    <property type="entry name" value="Glycophorin"/>
</dbReference>
<dbReference type="InterPro" id="IPR049535">
    <property type="entry name" value="GYPA_B"/>
</dbReference>
<dbReference type="PANTHER" id="PTHR13813">
    <property type="entry name" value="GLYCOPHORIN"/>
    <property type="match status" value="1"/>
</dbReference>
<dbReference type="PANTHER" id="PTHR13813:SF3">
    <property type="entry name" value="GLYCOPHORIN-A"/>
    <property type="match status" value="1"/>
</dbReference>
<dbReference type="Pfam" id="PF01102">
    <property type="entry name" value="Glycophorin_A"/>
    <property type="match status" value="1"/>
</dbReference>
<organism>
    <name type="scientific">Canis lupus familiaris</name>
    <name type="common">Dog</name>
    <name type="synonym">Canis familiaris</name>
    <dbReference type="NCBI Taxonomy" id="9615"/>
    <lineage>
        <taxon>Eukaryota</taxon>
        <taxon>Metazoa</taxon>
        <taxon>Chordata</taxon>
        <taxon>Craniata</taxon>
        <taxon>Vertebrata</taxon>
        <taxon>Euteleostomi</taxon>
        <taxon>Mammalia</taxon>
        <taxon>Eutheria</taxon>
        <taxon>Laurasiatheria</taxon>
        <taxon>Carnivora</taxon>
        <taxon>Caniformia</taxon>
        <taxon>Canidae</taxon>
        <taxon>Canis</taxon>
    </lineage>
</organism>
<sequence>MYEKIVIVLLLSGYISTQDVTEIIPHEISSKLPTQAGFISTEDPSFNTPSTRQDPSGTMYQHLPDGGQKARQQLVHIFSEPVIIGIIYAVMLGIIITILSIAFCIGQLTKKSSLPAQVASPEDVDPEVL</sequence>